<protein>
    <recommendedName>
        <fullName>Lysozyme-like protein 1</fullName>
        <ecNumber>3.2.1.17</ecNumber>
    </recommendedName>
</protein>
<feature type="signal peptide" evidence="1">
    <location>
        <begin position="1"/>
        <end position="19"/>
    </location>
</feature>
<feature type="chain" id="PRO_0000240636" description="Lysozyme-like protein 1">
    <location>
        <begin position="20"/>
        <end position="148"/>
    </location>
</feature>
<feature type="domain" description="C-type lysozyme" evidence="2">
    <location>
        <begin position="20"/>
        <end position="148"/>
    </location>
</feature>
<feature type="active site" evidence="2">
    <location>
        <position position="54"/>
    </location>
</feature>
<feature type="active site" evidence="2">
    <location>
        <position position="71"/>
    </location>
</feature>
<feature type="glycosylation site" description="N-linked (GlcNAc...) asparagine" evidence="1">
    <location>
        <position position="58"/>
    </location>
</feature>
<feature type="disulfide bond" evidence="2">
    <location>
        <begin position="25"/>
        <end position="145"/>
    </location>
</feature>
<feature type="disulfide bond" evidence="2">
    <location>
        <begin position="49"/>
        <end position="133"/>
    </location>
</feature>
<feature type="disulfide bond" evidence="2">
    <location>
        <begin position="83"/>
        <end position="98"/>
    </location>
</feature>
<feature type="disulfide bond" evidence="2">
    <location>
        <begin position="94"/>
        <end position="112"/>
    </location>
</feature>
<sequence>MKSVGVFALIISFSIVAESKIYTRCKLAKIFAKAGLDNYGGFALGNWLCMAYYESHYNTTAENVLEDGSTDYGIFQINSFTWCRNARKHQKNHCHVACSALITDDLTDAILCAKKIVKETQGMNYWQGWKKNCENKDMSEWKRGCEVS</sequence>
<reference key="1">
    <citation type="submission" date="2004-03" db="EMBL/GenBank/DDBJ databases">
        <authorList>
            <person name="Zhang K."/>
            <person name="Yu L."/>
        </authorList>
    </citation>
    <scope>NUCLEOTIDE SEQUENCE [MRNA]</scope>
    <source>
        <tissue>Testis</tissue>
    </source>
</reference>
<reference key="2">
    <citation type="journal article" date="2005" name="Science">
        <title>The transcriptional landscape of the mammalian genome.</title>
        <authorList>
            <person name="Carninci P."/>
            <person name="Kasukawa T."/>
            <person name="Katayama S."/>
            <person name="Gough J."/>
            <person name="Frith M.C."/>
            <person name="Maeda N."/>
            <person name="Oyama R."/>
            <person name="Ravasi T."/>
            <person name="Lenhard B."/>
            <person name="Wells C."/>
            <person name="Kodzius R."/>
            <person name="Shimokawa K."/>
            <person name="Bajic V.B."/>
            <person name="Brenner S.E."/>
            <person name="Batalov S."/>
            <person name="Forrest A.R."/>
            <person name="Zavolan M."/>
            <person name="Davis M.J."/>
            <person name="Wilming L.G."/>
            <person name="Aidinis V."/>
            <person name="Allen J.E."/>
            <person name="Ambesi-Impiombato A."/>
            <person name="Apweiler R."/>
            <person name="Aturaliya R.N."/>
            <person name="Bailey T.L."/>
            <person name="Bansal M."/>
            <person name="Baxter L."/>
            <person name="Beisel K.W."/>
            <person name="Bersano T."/>
            <person name="Bono H."/>
            <person name="Chalk A.M."/>
            <person name="Chiu K.P."/>
            <person name="Choudhary V."/>
            <person name="Christoffels A."/>
            <person name="Clutterbuck D.R."/>
            <person name="Crowe M.L."/>
            <person name="Dalla E."/>
            <person name="Dalrymple B.P."/>
            <person name="de Bono B."/>
            <person name="Della Gatta G."/>
            <person name="di Bernardo D."/>
            <person name="Down T."/>
            <person name="Engstrom P."/>
            <person name="Fagiolini M."/>
            <person name="Faulkner G."/>
            <person name="Fletcher C.F."/>
            <person name="Fukushima T."/>
            <person name="Furuno M."/>
            <person name="Futaki S."/>
            <person name="Gariboldi M."/>
            <person name="Georgii-Hemming P."/>
            <person name="Gingeras T.R."/>
            <person name="Gojobori T."/>
            <person name="Green R.E."/>
            <person name="Gustincich S."/>
            <person name="Harbers M."/>
            <person name="Hayashi Y."/>
            <person name="Hensch T.K."/>
            <person name="Hirokawa N."/>
            <person name="Hill D."/>
            <person name="Huminiecki L."/>
            <person name="Iacono M."/>
            <person name="Ikeo K."/>
            <person name="Iwama A."/>
            <person name="Ishikawa T."/>
            <person name="Jakt M."/>
            <person name="Kanapin A."/>
            <person name="Katoh M."/>
            <person name="Kawasawa Y."/>
            <person name="Kelso J."/>
            <person name="Kitamura H."/>
            <person name="Kitano H."/>
            <person name="Kollias G."/>
            <person name="Krishnan S.P."/>
            <person name="Kruger A."/>
            <person name="Kummerfeld S.K."/>
            <person name="Kurochkin I.V."/>
            <person name="Lareau L.F."/>
            <person name="Lazarevic D."/>
            <person name="Lipovich L."/>
            <person name="Liu J."/>
            <person name="Liuni S."/>
            <person name="McWilliam S."/>
            <person name="Madan Babu M."/>
            <person name="Madera M."/>
            <person name="Marchionni L."/>
            <person name="Matsuda H."/>
            <person name="Matsuzawa S."/>
            <person name="Miki H."/>
            <person name="Mignone F."/>
            <person name="Miyake S."/>
            <person name="Morris K."/>
            <person name="Mottagui-Tabar S."/>
            <person name="Mulder N."/>
            <person name="Nakano N."/>
            <person name="Nakauchi H."/>
            <person name="Ng P."/>
            <person name="Nilsson R."/>
            <person name="Nishiguchi S."/>
            <person name="Nishikawa S."/>
            <person name="Nori F."/>
            <person name="Ohara O."/>
            <person name="Okazaki Y."/>
            <person name="Orlando V."/>
            <person name="Pang K.C."/>
            <person name="Pavan W.J."/>
            <person name="Pavesi G."/>
            <person name="Pesole G."/>
            <person name="Petrovsky N."/>
            <person name="Piazza S."/>
            <person name="Reed J."/>
            <person name="Reid J.F."/>
            <person name="Ring B.Z."/>
            <person name="Ringwald M."/>
            <person name="Rost B."/>
            <person name="Ruan Y."/>
            <person name="Salzberg S.L."/>
            <person name="Sandelin A."/>
            <person name="Schneider C."/>
            <person name="Schoenbach C."/>
            <person name="Sekiguchi K."/>
            <person name="Semple C.A."/>
            <person name="Seno S."/>
            <person name="Sessa L."/>
            <person name="Sheng Y."/>
            <person name="Shibata Y."/>
            <person name="Shimada H."/>
            <person name="Shimada K."/>
            <person name="Silva D."/>
            <person name="Sinclair B."/>
            <person name="Sperling S."/>
            <person name="Stupka E."/>
            <person name="Sugiura K."/>
            <person name="Sultana R."/>
            <person name="Takenaka Y."/>
            <person name="Taki K."/>
            <person name="Tammoja K."/>
            <person name="Tan S.L."/>
            <person name="Tang S."/>
            <person name="Taylor M.S."/>
            <person name="Tegner J."/>
            <person name="Teichmann S.A."/>
            <person name="Ueda H.R."/>
            <person name="van Nimwegen E."/>
            <person name="Verardo R."/>
            <person name="Wei C.L."/>
            <person name="Yagi K."/>
            <person name="Yamanishi H."/>
            <person name="Zabarovsky E."/>
            <person name="Zhu S."/>
            <person name="Zimmer A."/>
            <person name="Hide W."/>
            <person name="Bult C."/>
            <person name="Grimmond S.M."/>
            <person name="Teasdale R.D."/>
            <person name="Liu E.T."/>
            <person name="Brusic V."/>
            <person name="Quackenbush J."/>
            <person name="Wahlestedt C."/>
            <person name="Mattick J.S."/>
            <person name="Hume D.A."/>
            <person name="Kai C."/>
            <person name="Sasaki D."/>
            <person name="Tomaru Y."/>
            <person name="Fukuda S."/>
            <person name="Kanamori-Katayama M."/>
            <person name="Suzuki M."/>
            <person name="Aoki J."/>
            <person name="Arakawa T."/>
            <person name="Iida J."/>
            <person name="Imamura K."/>
            <person name="Itoh M."/>
            <person name="Kato T."/>
            <person name="Kawaji H."/>
            <person name="Kawagashira N."/>
            <person name="Kawashima T."/>
            <person name="Kojima M."/>
            <person name="Kondo S."/>
            <person name="Konno H."/>
            <person name="Nakano K."/>
            <person name="Ninomiya N."/>
            <person name="Nishio T."/>
            <person name="Okada M."/>
            <person name="Plessy C."/>
            <person name="Shibata K."/>
            <person name="Shiraki T."/>
            <person name="Suzuki S."/>
            <person name="Tagami M."/>
            <person name="Waki K."/>
            <person name="Watahiki A."/>
            <person name="Okamura-Oho Y."/>
            <person name="Suzuki H."/>
            <person name="Kawai J."/>
            <person name="Hayashizaki Y."/>
        </authorList>
    </citation>
    <scope>NUCLEOTIDE SEQUENCE [LARGE SCALE MRNA]</scope>
    <source>
        <strain>C57BL/6J</strain>
        <tissue>Testis</tissue>
    </source>
</reference>
<reference key="3">
    <citation type="journal article" date="2004" name="Genome Res.">
        <title>The status, quality, and expansion of the NIH full-length cDNA project: the Mammalian Gene Collection (MGC).</title>
        <authorList>
            <consortium name="The MGC Project Team"/>
        </authorList>
    </citation>
    <scope>NUCLEOTIDE SEQUENCE [LARGE SCALE MRNA]</scope>
    <source>
        <tissue>Testis</tissue>
    </source>
</reference>
<reference key="4">
    <citation type="journal article" date="2010" name="Cell">
        <title>A tissue-specific atlas of mouse protein phosphorylation and expression.</title>
        <authorList>
            <person name="Huttlin E.L."/>
            <person name="Jedrychowski M.P."/>
            <person name="Elias J.E."/>
            <person name="Goswami T."/>
            <person name="Rad R."/>
            <person name="Beausoleil S.A."/>
            <person name="Villen J."/>
            <person name="Haas W."/>
            <person name="Sowa M.E."/>
            <person name="Gygi S.P."/>
        </authorList>
    </citation>
    <scope>IDENTIFICATION BY MASS SPECTROMETRY [LARGE SCALE ANALYSIS]</scope>
    <source>
        <tissue>Testis</tissue>
    </source>
</reference>
<name>LYZL1_MOUSE</name>
<organism>
    <name type="scientific">Mus musculus</name>
    <name type="common">Mouse</name>
    <dbReference type="NCBI Taxonomy" id="10090"/>
    <lineage>
        <taxon>Eukaryota</taxon>
        <taxon>Metazoa</taxon>
        <taxon>Chordata</taxon>
        <taxon>Craniata</taxon>
        <taxon>Vertebrata</taxon>
        <taxon>Euteleostomi</taxon>
        <taxon>Mammalia</taxon>
        <taxon>Eutheria</taxon>
        <taxon>Euarchontoglires</taxon>
        <taxon>Glires</taxon>
        <taxon>Rodentia</taxon>
        <taxon>Myomorpha</taxon>
        <taxon>Muroidea</taxon>
        <taxon>Muridae</taxon>
        <taxon>Murinae</taxon>
        <taxon>Mus</taxon>
        <taxon>Mus</taxon>
    </lineage>
</organism>
<dbReference type="EC" id="3.2.1.17"/>
<dbReference type="EMBL" id="AY572447">
    <property type="protein sequence ID" value="AAS77886.1"/>
    <property type="molecule type" value="mRNA"/>
</dbReference>
<dbReference type="EMBL" id="AK006241">
    <property type="protein sequence ID" value="BAB24475.1"/>
    <property type="molecule type" value="mRNA"/>
</dbReference>
<dbReference type="EMBL" id="AK006630">
    <property type="protein sequence ID" value="BAB24680.1"/>
    <property type="molecule type" value="mRNA"/>
</dbReference>
<dbReference type="EMBL" id="BC048450">
    <property type="protein sequence ID" value="AAH48450.1"/>
    <property type="molecule type" value="mRNA"/>
</dbReference>
<dbReference type="CCDS" id="CCDS29035.1"/>
<dbReference type="RefSeq" id="NP_080368.1">
    <property type="nucleotide sequence ID" value="NM_026092.4"/>
</dbReference>
<dbReference type="SMR" id="Q9CPX3"/>
<dbReference type="FunCoup" id="Q9CPX3">
    <property type="interactions" value="26"/>
</dbReference>
<dbReference type="STRING" id="10090.ENSMUSP00000025076"/>
<dbReference type="CAZy" id="GH22">
    <property type="family name" value="Glycoside Hydrolase Family 22"/>
</dbReference>
<dbReference type="GlyCosmos" id="Q9CPX3">
    <property type="glycosylation" value="1 site, No reported glycans"/>
</dbReference>
<dbReference type="GlyGen" id="Q9CPX3">
    <property type="glycosylation" value="1 site"/>
</dbReference>
<dbReference type="PhosphoSitePlus" id="Q9CPX3"/>
<dbReference type="PaxDb" id="10090-ENSMUSP00000025076"/>
<dbReference type="ProteomicsDB" id="290206"/>
<dbReference type="DNASU" id="67328"/>
<dbReference type="Ensembl" id="ENSMUST00000025076.10">
    <property type="protein sequence ID" value="ENSMUSP00000025076.4"/>
    <property type="gene ID" value="ENSMUSG00000024233.11"/>
</dbReference>
<dbReference type="GeneID" id="67328"/>
<dbReference type="KEGG" id="mmu:67328"/>
<dbReference type="UCSC" id="uc008dyd.1">
    <property type="organism name" value="mouse"/>
</dbReference>
<dbReference type="AGR" id="MGI:1914578"/>
<dbReference type="CTD" id="84569"/>
<dbReference type="MGI" id="MGI:1914578">
    <property type="gene designation" value="Lyzl1"/>
</dbReference>
<dbReference type="VEuPathDB" id="HostDB:ENSMUSG00000024233"/>
<dbReference type="eggNOG" id="ENOG502SCGK">
    <property type="taxonomic scope" value="Eukaryota"/>
</dbReference>
<dbReference type="GeneTree" id="ENSGT00940000159227"/>
<dbReference type="HOGENOM" id="CLU_111620_0_1_1"/>
<dbReference type="InParanoid" id="Q9CPX3"/>
<dbReference type="OMA" id="TWCRRAK"/>
<dbReference type="OrthoDB" id="17373at2759"/>
<dbReference type="PhylomeDB" id="Q9CPX3"/>
<dbReference type="TreeFam" id="TF324882"/>
<dbReference type="BioGRID-ORCS" id="67328">
    <property type="hits" value="2 hits in 76 CRISPR screens"/>
</dbReference>
<dbReference type="ChiTaRS" id="Lyzl1">
    <property type="organism name" value="mouse"/>
</dbReference>
<dbReference type="PRO" id="PR:Q9CPX3"/>
<dbReference type="Proteomes" id="UP000000589">
    <property type="component" value="Chromosome 18"/>
</dbReference>
<dbReference type="RNAct" id="Q9CPX3">
    <property type="molecule type" value="protein"/>
</dbReference>
<dbReference type="Bgee" id="ENSMUSG00000024233">
    <property type="expression patterns" value="Expressed in spermatid and 5 other cell types or tissues"/>
</dbReference>
<dbReference type="ExpressionAtlas" id="Q9CPX3">
    <property type="expression patterns" value="baseline and differential"/>
</dbReference>
<dbReference type="GO" id="GO:0005576">
    <property type="term" value="C:extracellular region"/>
    <property type="evidence" value="ECO:0007669"/>
    <property type="project" value="UniProtKB-SubCell"/>
</dbReference>
<dbReference type="GO" id="GO:0003796">
    <property type="term" value="F:lysozyme activity"/>
    <property type="evidence" value="ECO:0007669"/>
    <property type="project" value="UniProtKB-EC"/>
</dbReference>
<dbReference type="CDD" id="cd16897">
    <property type="entry name" value="LYZ_C"/>
    <property type="match status" value="1"/>
</dbReference>
<dbReference type="FunFam" id="1.10.530.10:FF:000001">
    <property type="entry name" value="Lysozyme C"/>
    <property type="match status" value="1"/>
</dbReference>
<dbReference type="Gene3D" id="1.10.530.10">
    <property type="match status" value="1"/>
</dbReference>
<dbReference type="InterPro" id="IPR001916">
    <property type="entry name" value="Glyco_hydro_22"/>
</dbReference>
<dbReference type="InterPro" id="IPR019799">
    <property type="entry name" value="Glyco_hydro_22_CS"/>
</dbReference>
<dbReference type="InterPro" id="IPR000974">
    <property type="entry name" value="Glyco_hydro_22_lys"/>
</dbReference>
<dbReference type="InterPro" id="IPR023346">
    <property type="entry name" value="Lysozyme-like_dom_sf"/>
</dbReference>
<dbReference type="PANTHER" id="PTHR11407">
    <property type="entry name" value="LYSOZYME C"/>
    <property type="match status" value="1"/>
</dbReference>
<dbReference type="PANTHER" id="PTHR11407:SF62">
    <property type="entry name" value="LYSOZYME-LIKE PROTEIN 1-RELATED"/>
    <property type="match status" value="1"/>
</dbReference>
<dbReference type="Pfam" id="PF00062">
    <property type="entry name" value="Lys"/>
    <property type="match status" value="1"/>
</dbReference>
<dbReference type="PRINTS" id="PR00137">
    <property type="entry name" value="LYSOZYME"/>
</dbReference>
<dbReference type="PRINTS" id="PR00135">
    <property type="entry name" value="LYZLACT"/>
</dbReference>
<dbReference type="SMART" id="SM00263">
    <property type="entry name" value="LYZ1"/>
    <property type="match status" value="1"/>
</dbReference>
<dbReference type="SUPFAM" id="SSF53955">
    <property type="entry name" value="Lysozyme-like"/>
    <property type="match status" value="1"/>
</dbReference>
<dbReference type="PROSITE" id="PS00128">
    <property type="entry name" value="GLYCOSYL_HYDROL_F22_1"/>
    <property type="match status" value="1"/>
</dbReference>
<dbReference type="PROSITE" id="PS51348">
    <property type="entry name" value="GLYCOSYL_HYDROL_F22_2"/>
    <property type="match status" value="1"/>
</dbReference>
<accession>Q9CPX3</accession>
<proteinExistence type="evidence at protein level"/>
<gene>
    <name type="primary">Lyzl1</name>
    <name type="synonym">Lyc2</name>
</gene>
<evidence type="ECO:0000255" key="1"/>
<evidence type="ECO:0000255" key="2">
    <source>
        <dbReference type="PROSITE-ProRule" id="PRU00680"/>
    </source>
</evidence>
<evidence type="ECO:0000305" key="3"/>
<keyword id="KW-1015">Disulfide bond</keyword>
<keyword id="KW-0325">Glycoprotein</keyword>
<keyword id="KW-0326">Glycosidase</keyword>
<keyword id="KW-0378">Hydrolase</keyword>
<keyword id="KW-1185">Reference proteome</keyword>
<keyword id="KW-0964">Secreted</keyword>
<keyword id="KW-0732">Signal</keyword>
<comment type="catalytic activity">
    <reaction>
        <text>Hydrolysis of (1-&gt;4)-beta-linkages between N-acetylmuramic acid and N-acetyl-D-glucosamine residues in a peptidoglycan and between N-acetyl-D-glucosamine residues in chitodextrins.</text>
        <dbReference type="EC" id="3.2.1.17"/>
    </reaction>
</comment>
<comment type="subunit">
    <text evidence="3">Monomer.</text>
</comment>
<comment type="subcellular location">
    <subcellularLocation>
        <location evidence="3">Secreted</location>
    </subcellularLocation>
</comment>
<comment type="similarity">
    <text evidence="2">Belongs to the glycosyl hydrolase 22 family.</text>
</comment>